<comment type="function">
    <text evidence="1">Transcription factor involved in RNA polymerase II (RNAPII) transcription regulation. Involved in transcription elongation. May function at post-recruitment and elongation steps of transcription.</text>
</comment>
<comment type="interaction">
    <interactant intactId="EBI-15834301">
        <id>O49413</id>
    </interactant>
    <interactant intactId="EBI-617078">
        <id>Q9LN63</id>
        <label>BZR2</label>
    </interactant>
    <organismsDiffer>false</organismsDiffer>
    <experiments>3</experiments>
</comment>
<comment type="subcellular location">
    <subcellularLocation>
        <location evidence="2">Nucleus</location>
    </subcellularLocation>
</comment>
<comment type="disruption phenotype">
    <text evidence="4">No visible phenotype under normal growth conditions.</text>
</comment>
<comment type="similarity">
    <text evidence="6">Belongs to the IWS1 family.</text>
</comment>
<sequence>MQELDSSNDEWVKELEGENEESKFTGRRLVKKSISVPELVDEVEEDLDDFTEPADDFNDKVGKKRQRKKKDESGLEKTKKNKKQNSEEVQEMWDSITNNTNSQYGDKVVVKPPKKKDEDAEEIKKLFSLRKKKSKCDKTSMEIGMQVEQVMANLEIAVEDDVICNREGKPAINKLMKLPLLNETLSKKPLQGEFLDHGVLNLLKNWLEPLPDGSLPNINIRSAVLMILNDFRIDLDQDSRREQLIKSGLGKVIMFLSKSDEETTPNRRLANDIINKWGRIIYNKSTRYDNMFTQEELDEQRQILLRRQTKTAPKVSGTRARDFNTDIDLYELGTWTGRARAKIPTTMSMDFKIRPPSKVDINQEEEPCSKWQMEKRHKNKQQKNIRKGGMQALKLSVDGRTMLKYL</sequence>
<evidence type="ECO:0000250" key="1">
    <source>
        <dbReference type="UniProtKB" id="F4ICK8"/>
    </source>
</evidence>
<evidence type="ECO:0000255" key="2">
    <source>
        <dbReference type="PROSITE-ProRule" id="PRU00649"/>
    </source>
</evidence>
<evidence type="ECO:0000256" key="3">
    <source>
        <dbReference type="SAM" id="MobiDB-lite"/>
    </source>
</evidence>
<evidence type="ECO:0000269" key="4">
    <source>
    </source>
</evidence>
<evidence type="ECO:0000303" key="5">
    <source>
    </source>
</evidence>
<evidence type="ECO:0000305" key="6"/>
<evidence type="ECO:0000312" key="7">
    <source>
        <dbReference type="Araport" id="AT4G19000"/>
    </source>
</evidence>
<organism>
    <name type="scientific">Arabidopsis thaliana</name>
    <name type="common">Mouse-ear cress</name>
    <dbReference type="NCBI Taxonomy" id="3702"/>
    <lineage>
        <taxon>Eukaryota</taxon>
        <taxon>Viridiplantae</taxon>
        <taxon>Streptophyta</taxon>
        <taxon>Embryophyta</taxon>
        <taxon>Tracheophyta</taxon>
        <taxon>Spermatophyta</taxon>
        <taxon>Magnoliopsida</taxon>
        <taxon>eudicotyledons</taxon>
        <taxon>Gunneridae</taxon>
        <taxon>Pentapetalae</taxon>
        <taxon>rosids</taxon>
        <taxon>malvids</taxon>
        <taxon>Brassicales</taxon>
        <taxon>Brassicaceae</taxon>
        <taxon>Camelineae</taxon>
        <taxon>Arabidopsis</taxon>
    </lineage>
</organism>
<gene>
    <name evidence="5" type="primary">IWS2</name>
    <name evidence="7" type="ordered locus">At4g19000</name>
</gene>
<feature type="chain" id="PRO_0000437493" description="Protein IWS1 homolog 2">
    <location>
        <begin position="1"/>
        <end position="406"/>
    </location>
</feature>
<feature type="domain" description="TFIIS N-terminal" evidence="2">
    <location>
        <begin position="201"/>
        <end position="284"/>
    </location>
</feature>
<feature type="region of interest" description="Disordered" evidence="3">
    <location>
        <begin position="1"/>
        <end position="28"/>
    </location>
</feature>
<feature type="region of interest" description="Disordered" evidence="3">
    <location>
        <begin position="41"/>
        <end position="89"/>
    </location>
</feature>
<feature type="compositionally biased region" description="Basic and acidic residues" evidence="3">
    <location>
        <begin position="10"/>
        <end position="24"/>
    </location>
</feature>
<feature type="compositionally biased region" description="Acidic residues" evidence="3">
    <location>
        <begin position="41"/>
        <end position="56"/>
    </location>
</feature>
<feature type="compositionally biased region" description="Basic and acidic residues" evidence="3">
    <location>
        <begin position="69"/>
        <end position="78"/>
    </location>
</feature>
<keyword id="KW-0539">Nucleus</keyword>
<keyword id="KW-1185">Reference proteome</keyword>
<keyword id="KW-0804">Transcription</keyword>
<keyword id="KW-0805">Transcription regulation</keyword>
<accession>O49413</accession>
<protein>
    <recommendedName>
        <fullName evidence="6">Protein IWS1 homolog 2</fullName>
        <shortName evidence="5">AtIWS2</shortName>
    </recommendedName>
</protein>
<dbReference type="EMBL" id="AL021711">
    <property type="protein sequence ID" value="CAA16757.1"/>
    <property type="molecule type" value="Genomic_DNA"/>
</dbReference>
<dbReference type="EMBL" id="AL161549">
    <property type="protein sequence ID" value="CAB78902.1"/>
    <property type="molecule type" value="Genomic_DNA"/>
</dbReference>
<dbReference type="EMBL" id="CP002687">
    <property type="status" value="NOT_ANNOTATED_CDS"/>
    <property type="molecule type" value="Genomic_DNA"/>
</dbReference>
<dbReference type="PIR" id="T05037">
    <property type="entry name" value="T05037"/>
</dbReference>
<dbReference type="SMR" id="O49413"/>
<dbReference type="DIP" id="DIP-58599N"/>
<dbReference type="FunCoup" id="O49413">
    <property type="interactions" value="1420"/>
</dbReference>
<dbReference type="IntAct" id="O49413">
    <property type="interactions" value="1"/>
</dbReference>
<dbReference type="STRING" id="3702.O49413"/>
<dbReference type="PaxDb" id="3702-AT4G19000.1"/>
<dbReference type="ProteomicsDB" id="238964"/>
<dbReference type="Araport" id="AT4G19000"/>
<dbReference type="TAIR" id="AT4G19000">
    <property type="gene designation" value="IWS2"/>
</dbReference>
<dbReference type="eggNOG" id="KOG1793">
    <property type="taxonomic scope" value="Eukaryota"/>
</dbReference>
<dbReference type="HOGENOM" id="CLU_040584_2_1_1"/>
<dbReference type="InParanoid" id="O49413"/>
<dbReference type="PhylomeDB" id="O49413"/>
<dbReference type="PRO" id="PR:O49413"/>
<dbReference type="Proteomes" id="UP000006548">
    <property type="component" value="Chromosome 4"/>
</dbReference>
<dbReference type="ExpressionAtlas" id="O49413">
    <property type="expression patterns" value="baseline and differential"/>
</dbReference>
<dbReference type="GO" id="GO:0005634">
    <property type="term" value="C:nucleus"/>
    <property type="evidence" value="ECO:0007669"/>
    <property type="project" value="UniProtKB-SubCell"/>
</dbReference>
<dbReference type="GO" id="GO:0009742">
    <property type="term" value="P:brassinosteroid mediated signaling pathway"/>
    <property type="evidence" value="ECO:0007669"/>
    <property type="project" value="InterPro"/>
</dbReference>
<dbReference type="GO" id="GO:0032784">
    <property type="term" value="P:regulation of DNA-templated transcription elongation"/>
    <property type="evidence" value="ECO:0007669"/>
    <property type="project" value="InterPro"/>
</dbReference>
<dbReference type="Gene3D" id="1.20.930.10">
    <property type="entry name" value="Conserved domain common to transcription factors TFIIS, elongin A, CRSP70"/>
    <property type="match status" value="1"/>
</dbReference>
<dbReference type="InterPro" id="IPR044204">
    <property type="entry name" value="IWS1/2"/>
</dbReference>
<dbReference type="InterPro" id="IPR035441">
    <property type="entry name" value="TFIIS/LEDGF_dom_sf"/>
</dbReference>
<dbReference type="InterPro" id="IPR017923">
    <property type="entry name" value="TFIIS_N"/>
</dbReference>
<dbReference type="PANTHER" id="PTHR47350">
    <property type="entry name" value="PROTEIN IWS1 HOMOLOG 1"/>
    <property type="match status" value="1"/>
</dbReference>
<dbReference type="PANTHER" id="PTHR47350:SF5">
    <property type="entry name" value="PROTEIN IWS1 HOMOLOG 2"/>
    <property type="match status" value="1"/>
</dbReference>
<dbReference type="Pfam" id="PF08711">
    <property type="entry name" value="Med26"/>
    <property type="match status" value="1"/>
</dbReference>
<dbReference type="PROSITE" id="PS51319">
    <property type="entry name" value="TFIIS_N"/>
    <property type="match status" value="1"/>
</dbReference>
<name>IWS2_ARATH</name>
<proteinExistence type="evidence at protein level"/>
<reference key="1">
    <citation type="journal article" date="1999" name="Nature">
        <title>Sequence and analysis of chromosome 4 of the plant Arabidopsis thaliana.</title>
        <authorList>
            <person name="Mayer K.F.X."/>
            <person name="Schueller C."/>
            <person name="Wambutt R."/>
            <person name="Murphy G."/>
            <person name="Volckaert G."/>
            <person name="Pohl T."/>
            <person name="Duesterhoeft A."/>
            <person name="Stiekema W."/>
            <person name="Entian K.-D."/>
            <person name="Terryn N."/>
            <person name="Harris B."/>
            <person name="Ansorge W."/>
            <person name="Brandt P."/>
            <person name="Grivell L.A."/>
            <person name="Rieger M."/>
            <person name="Weichselgartner M."/>
            <person name="de Simone V."/>
            <person name="Obermaier B."/>
            <person name="Mache R."/>
            <person name="Mueller M."/>
            <person name="Kreis M."/>
            <person name="Delseny M."/>
            <person name="Puigdomenech P."/>
            <person name="Watson M."/>
            <person name="Schmidtheini T."/>
            <person name="Reichert B."/>
            <person name="Portetelle D."/>
            <person name="Perez-Alonso M."/>
            <person name="Boutry M."/>
            <person name="Bancroft I."/>
            <person name="Vos P."/>
            <person name="Hoheisel J."/>
            <person name="Zimmermann W."/>
            <person name="Wedler H."/>
            <person name="Ridley P."/>
            <person name="Langham S.-A."/>
            <person name="McCullagh B."/>
            <person name="Bilham L."/>
            <person name="Robben J."/>
            <person name="van der Schueren J."/>
            <person name="Grymonprez B."/>
            <person name="Chuang Y.-J."/>
            <person name="Vandenbussche F."/>
            <person name="Braeken M."/>
            <person name="Weltjens I."/>
            <person name="Voet M."/>
            <person name="Bastiaens I."/>
            <person name="Aert R."/>
            <person name="Defoor E."/>
            <person name="Weitzenegger T."/>
            <person name="Bothe G."/>
            <person name="Ramsperger U."/>
            <person name="Hilbert H."/>
            <person name="Braun M."/>
            <person name="Holzer E."/>
            <person name="Brandt A."/>
            <person name="Peters S."/>
            <person name="van Staveren M."/>
            <person name="Dirkse W."/>
            <person name="Mooijman P."/>
            <person name="Klein Lankhorst R."/>
            <person name="Rose M."/>
            <person name="Hauf J."/>
            <person name="Koetter P."/>
            <person name="Berneiser S."/>
            <person name="Hempel S."/>
            <person name="Feldpausch M."/>
            <person name="Lamberth S."/>
            <person name="Van den Daele H."/>
            <person name="De Keyser A."/>
            <person name="Buysshaert C."/>
            <person name="Gielen J."/>
            <person name="Villarroel R."/>
            <person name="De Clercq R."/>
            <person name="van Montagu M."/>
            <person name="Rogers J."/>
            <person name="Cronin A."/>
            <person name="Quail M.A."/>
            <person name="Bray-Allen S."/>
            <person name="Clark L."/>
            <person name="Doggett J."/>
            <person name="Hall S."/>
            <person name="Kay M."/>
            <person name="Lennard N."/>
            <person name="McLay K."/>
            <person name="Mayes R."/>
            <person name="Pettett A."/>
            <person name="Rajandream M.A."/>
            <person name="Lyne M."/>
            <person name="Benes V."/>
            <person name="Rechmann S."/>
            <person name="Borkova D."/>
            <person name="Bloecker H."/>
            <person name="Scharfe M."/>
            <person name="Grimm M."/>
            <person name="Loehnert T.-H."/>
            <person name="Dose S."/>
            <person name="de Haan M."/>
            <person name="Maarse A.C."/>
            <person name="Schaefer M."/>
            <person name="Mueller-Auer S."/>
            <person name="Gabel C."/>
            <person name="Fuchs M."/>
            <person name="Fartmann B."/>
            <person name="Granderath K."/>
            <person name="Dauner D."/>
            <person name="Herzl A."/>
            <person name="Neumann S."/>
            <person name="Argiriou A."/>
            <person name="Vitale D."/>
            <person name="Liguori R."/>
            <person name="Piravandi E."/>
            <person name="Massenet O."/>
            <person name="Quigley F."/>
            <person name="Clabauld G."/>
            <person name="Muendlein A."/>
            <person name="Felber R."/>
            <person name="Schnabl S."/>
            <person name="Hiller R."/>
            <person name="Schmidt W."/>
            <person name="Lecharny A."/>
            <person name="Aubourg S."/>
            <person name="Chefdor F."/>
            <person name="Cooke R."/>
            <person name="Berger C."/>
            <person name="Monfort A."/>
            <person name="Casacuberta E."/>
            <person name="Gibbons T."/>
            <person name="Weber N."/>
            <person name="Vandenbol M."/>
            <person name="Bargues M."/>
            <person name="Terol J."/>
            <person name="Torres A."/>
            <person name="Perez-Perez A."/>
            <person name="Purnelle B."/>
            <person name="Bent E."/>
            <person name="Johnson S."/>
            <person name="Tacon D."/>
            <person name="Jesse T."/>
            <person name="Heijnen L."/>
            <person name="Schwarz S."/>
            <person name="Scholler P."/>
            <person name="Heber S."/>
            <person name="Francs P."/>
            <person name="Bielke C."/>
            <person name="Frishman D."/>
            <person name="Haase D."/>
            <person name="Lemcke K."/>
            <person name="Mewes H.-W."/>
            <person name="Stocker S."/>
            <person name="Zaccaria P."/>
            <person name="Bevan M."/>
            <person name="Wilson R.K."/>
            <person name="de la Bastide M."/>
            <person name="Habermann K."/>
            <person name="Parnell L."/>
            <person name="Dedhia N."/>
            <person name="Gnoj L."/>
            <person name="Schutz K."/>
            <person name="Huang E."/>
            <person name="Spiegel L."/>
            <person name="Sekhon M."/>
            <person name="Murray J."/>
            <person name="Sheet P."/>
            <person name="Cordes M."/>
            <person name="Abu-Threideh J."/>
            <person name="Stoneking T."/>
            <person name="Kalicki J."/>
            <person name="Graves T."/>
            <person name="Harmon G."/>
            <person name="Edwards J."/>
            <person name="Latreille P."/>
            <person name="Courtney L."/>
            <person name="Cloud J."/>
            <person name="Abbott A."/>
            <person name="Scott K."/>
            <person name="Johnson D."/>
            <person name="Minx P."/>
            <person name="Bentley D."/>
            <person name="Fulton B."/>
            <person name="Miller N."/>
            <person name="Greco T."/>
            <person name="Kemp K."/>
            <person name="Kramer J."/>
            <person name="Fulton L."/>
            <person name="Mardis E."/>
            <person name="Dante M."/>
            <person name="Pepin K."/>
            <person name="Hillier L.W."/>
            <person name="Nelson J."/>
            <person name="Spieth J."/>
            <person name="Ryan E."/>
            <person name="Andrews S."/>
            <person name="Geisel C."/>
            <person name="Layman D."/>
            <person name="Du H."/>
            <person name="Ali J."/>
            <person name="Berghoff A."/>
            <person name="Jones K."/>
            <person name="Drone K."/>
            <person name="Cotton M."/>
            <person name="Joshu C."/>
            <person name="Antonoiu B."/>
            <person name="Zidanic M."/>
            <person name="Strong C."/>
            <person name="Sun H."/>
            <person name="Lamar B."/>
            <person name="Yordan C."/>
            <person name="Ma P."/>
            <person name="Zhong J."/>
            <person name="Preston R."/>
            <person name="Vil D."/>
            <person name="Shekher M."/>
            <person name="Matero A."/>
            <person name="Shah R."/>
            <person name="Swaby I.K."/>
            <person name="O'Shaughnessy A."/>
            <person name="Rodriguez M."/>
            <person name="Hoffman J."/>
            <person name="Till S."/>
            <person name="Granat S."/>
            <person name="Shohdy N."/>
            <person name="Hasegawa A."/>
            <person name="Hameed A."/>
            <person name="Lodhi M."/>
            <person name="Johnson A."/>
            <person name="Chen E."/>
            <person name="Marra M.A."/>
            <person name="Martienssen R."/>
            <person name="McCombie W.R."/>
        </authorList>
    </citation>
    <scope>NUCLEOTIDE SEQUENCE [LARGE SCALE GENOMIC DNA]</scope>
    <source>
        <strain>cv. Columbia</strain>
    </source>
</reference>
<reference key="2">
    <citation type="journal article" date="2017" name="Plant J.">
        <title>Araport11: a complete reannotation of the Arabidopsis thaliana reference genome.</title>
        <authorList>
            <person name="Cheng C.Y."/>
            <person name="Krishnakumar V."/>
            <person name="Chan A.P."/>
            <person name="Thibaud-Nissen F."/>
            <person name="Schobel S."/>
            <person name="Town C.D."/>
        </authorList>
    </citation>
    <scope>GENOME REANNOTATION</scope>
    <source>
        <strain>cv. Columbia</strain>
    </source>
</reference>
<reference key="3">
    <citation type="journal article" date="2010" name="Proc. Natl. Acad. Sci. U.S.A.">
        <title>Arabidopsis IWS1 interacts with transcription factor BES1 and is involved in plant steroid hormone brassinosteroid regulated gene expression.</title>
        <authorList>
            <person name="Li L."/>
            <person name="Ye H."/>
            <person name="Guo H."/>
            <person name="Yin Y."/>
        </authorList>
    </citation>
    <scope>DISRUPTION PHENOTYPE</scope>
    <source>
        <strain>cv. En-2</strain>
    </source>
</reference>